<gene>
    <name evidence="1" type="primary">thrS</name>
    <name type="ordered locus">PGN_0962</name>
</gene>
<dbReference type="EC" id="6.1.1.3" evidence="1"/>
<dbReference type="EMBL" id="AP009380">
    <property type="protein sequence ID" value="BAG33481.1"/>
    <property type="molecule type" value="Genomic_DNA"/>
</dbReference>
<dbReference type="RefSeq" id="WP_004584228.1">
    <property type="nucleotide sequence ID" value="NC_010729.1"/>
</dbReference>
<dbReference type="SMR" id="B2RJD6"/>
<dbReference type="GeneID" id="29256174"/>
<dbReference type="KEGG" id="pgn:PGN_0962"/>
<dbReference type="eggNOG" id="COG0441">
    <property type="taxonomic scope" value="Bacteria"/>
</dbReference>
<dbReference type="HOGENOM" id="CLU_008554_0_1_10"/>
<dbReference type="OrthoDB" id="9802304at2"/>
<dbReference type="BioCyc" id="PGIN431947:G1G2V-1081-MONOMER"/>
<dbReference type="Proteomes" id="UP000008842">
    <property type="component" value="Chromosome"/>
</dbReference>
<dbReference type="GO" id="GO:0005737">
    <property type="term" value="C:cytoplasm"/>
    <property type="evidence" value="ECO:0007669"/>
    <property type="project" value="UniProtKB-SubCell"/>
</dbReference>
<dbReference type="GO" id="GO:0005524">
    <property type="term" value="F:ATP binding"/>
    <property type="evidence" value="ECO:0007669"/>
    <property type="project" value="UniProtKB-UniRule"/>
</dbReference>
<dbReference type="GO" id="GO:0046872">
    <property type="term" value="F:metal ion binding"/>
    <property type="evidence" value="ECO:0007669"/>
    <property type="project" value="UniProtKB-KW"/>
</dbReference>
<dbReference type="GO" id="GO:0004829">
    <property type="term" value="F:threonine-tRNA ligase activity"/>
    <property type="evidence" value="ECO:0007669"/>
    <property type="project" value="UniProtKB-UniRule"/>
</dbReference>
<dbReference type="GO" id="GO:0000049">
    <property type="term" value="F:tRNA binding"/>
    <property type="evidence" value="ECO:0007669"/>
    <property type="project" value="UniProtKB-KW"/>
</dbReference>
<dbReference type="GO" id="GO:0006435">
    <property type="term" value="P:threonyl-tRNA aminoacylation"/>
    <property type="evidence" value="ECO:0007669"/>
    <property type="project" value="UniProtKB-UniRule"/>
</dbReference>
<dbReference type="CDD" id="cd01667">
    <property type="entry name" value="TGS_ThrRS"/>
    <property type="match status" value="1"/>
</dbReference>
<dbReference type="CDD" id="cd00860">
    <property type="entry name" value="ThrRS_anticodon"/>
    <property type="match status" value="1"/>
</dbReference>
<dbReference type="CDD" id="cd00771">
    <property type="entry name" value="ThrRS_core"/>
    <property type="match status" value="1"/>
</dbReference>
<dbReference type="FunFam" id="3.10.20.30:FF:000005">
    <property type="entry name" value="Threonine--tRNA ligase"/>
    <property type="match status" value="1"/>
</dbReference>
<dbReference type="FunFam" id="3.30.930.10:FF:000002">
    <property type="entry name" value="Threonine--tRNA ligase"/>
    <property type="match status" value="1"/>
</dbReference>
<dbReference type="FunFam" id="3.40.50.800:FF:000001">
    <property type="entry name" value="Threonine--tRNA ligase"/>
    <property type="match status" value="1"/>
</dbReference>
<dbReference type="FunFam" id="3.30.980.10:FF:000005">
    <property type="entry name" value="Threonyl-tRNA synthetase, mitochondrial"/>
    <property type="match status" value="1"/>
</dbReference>
<dbReference type="Gene3D" id="3.10.20.30">
    <property type="match status" value="1"/>
</dbReference>
<dbReference type="Gene3D" id="3.30.54.20">
    <property type="match status" value="1"/>
</dbReference>
<dbReference type="Gene3D" id="3.40.50.800">
    <property type="entry name" value="Anticodon-binding domain"/>
    <property type="match status" value="1"/>
</dbReference>
<dbReference type="Gene3D" id="3.30.930.10">
    <property type="entry name" value="Bira Bifunctional Protein, Domain 2"/>
    <property type="match status" value="1"/>
</dbReference>
<dbReference type="Gene3D" id="3.30.980.10">
    <property type="entry name" value="Threonyl-trna Synthetase, Chain A, domain 2"/>
    <property type="match status" value="1"/>
</dbReference>
<dbReference type="HAMAP" id="MF_00184">
    <property type="entry name" value="Thr_tRNA_synth"/>
    <property type="match status" value="1"/>
</dbReference>
<dbReference type="InterPro" id="IPR002314">
    <property type="entry name" value="aa-tRNA-synt_IIb"/>
</dbReference>
<dbReference type="InterPro" id="IPR006195">
    <property type="entry name" value="aa-tRNA-synth_II"/>
</dbReference>
<dbReference type="InterPro" id="IPR045864">
    <property type="entry name" value="aa-tRNA-synth_II/BPL/LPL"/>
</dbReference>
<dbReference type="InterPro" id="IPR004154">
    <property type="entry name" value="Anticodon-bd"/>
</dbReference>
<dbReference type="InterPro" id="IPR036621">
    <property type="entry name" value="Anticodon-bd_dom_sf"/>
</dbReference>
<dbReference type="InterPro" id="IPR012675">
    <property type="entry name" value="Beta-grasp_dom_sf"/>
</dbReference>
<dbReference type="InterPro" id="IPR004095">
    <property type="entry name" value="TGS"/>
</dbReference>
<dbReference type="InterPro" id="IPR012676">
    <property type="entry name" value="TGS-like"/>
</dbReference>
<dbReference type="InterPro" id="IPR002320">
    <property type="entry name" value="Thr-tRNA-ligase_IIa"/>
</dbReference>
<dbReference type="InterPro" id="IPR018163">
    <property type="entry name" value="Thr/Ala-tRNA-synth_IIc_edit"/>
</dbReference>
<dbReference type="InterPro" id="IPR047246">
    <property type="entry name" value="ThrRS_anticodon"/>
</dbReference>
<dbReference type="InterPro" id="IPR033728">
    <property type="entry name" value="ThrRS_core"/>
</dbReference>
<dbReference type="InterPro" id="IPR012947">
    <property type="entry name" value="tRNA_SAD"/>
</dbReference>
<dbReference type="NCBIfam" id="TIGR00418">
    <property type="entry name" value="thrS"/>
    <property type="match status" value="1"/>
</dbReference>
<dbReference type="PANTHER" id="PTHR11451:SF44">
    <property type="entry name" value="THREONINE--TRNA LIGASE, CHLOROPLASTIC_MITOCHONDRIAL 2"/>
    <property type="match status" value="1"/>
</dbReference>
<dbReference type="PANTHER" id="PTHR11451">
    <property type="entry name" value="THREONINE-TRNA LIGASE"/>
    <property type="match status" value="1"/>
</dbReference>
<dbReference type="Pfam" id="PF03129">
    <property type="entry name" value="HGTP_anticodon"/>
    <property type="match status" value="1"/>
</dbReference>
<dbReference type="Pfam" id="PF02824">
    <property type="entry name" value="TGS"/>
    <property type="match status" value="1"/>
</dbReference>
<dbReference type="Pfam" id="PF00587">
    <property type="entry name" value="tRNA-synt_2b"/>
    <property type="match status" value="1"/>
</dbReference>
<dbReference type="Pfam" id="PF07973">
    <property type="entry name" value="tRNA_SAD"/>
    <property type="match status" value="1"/>
</dbReference>
<dbReference type="PRINTS" id="PR01047">
    <property type="entry name" value="TRNASYNTHTHR"/>
</dbReference>
<dbReference type="SMART" id="SM00863">
    <property type="entry name" value="tRNA_SAD"/>
    <property type="match status" value="1"/>
</dbReference>
<dbReference type="SUPFAM" id="SSF52954">
    <property type="entry name" value="Class II aaRS ABD-related"/>
    <property type="match status" value="1"/>
</dbReference>
<dbReference type="SUPFAM" id="SSF55681">
    <property type="entry name" value="Class II aaRS and biotin synthetases"/>
    <property type="match status" value="1"/>
</dbReference>
<dbReference type="SUPFAM" id="SSF81271">
    <property type="entry name" value="TGS-like"/>
    <property type="match status" value="1"/>
</dbReference>
<dbReference type="SUPFAM" id="SSF55186">
    <property type="entry name" value="ThrRS/AlaRS common domain"/>
    <property type="match status" value="1"/>
</dbReference>
<dbReference type="PROSITE" id="PS50862">
    <property type="entry name" value="AA_TRNA_LIGASE_II"/>
    <property type="match status" value="1"/>
</dbReference>
<dbReference type="PROSITE" id="PS51880">
    <property type="entry name" value="TGS"/>
    <property type="match status" value="1"/>
</dbReference>
<accession>B2RJD6</accession>
<name>SYT_PORG3</name>
<feature type="chain" id="PRO_1000098595" description="Threonine--tRNA ligase">
    <location>
        <begin position="1"/>
        <end position="653"/>
    </location>
</feature>
<feature type="domain" description="TGS" evidence="2">
    <location>
        <begin position="1"/>
        <end position="61"/>
    </location>
</feature>
<feature type="region of interest" description="Catalytic" evidence="1">
    <location>
        <begin position="243"/>
        <end position="542"/>
    </location>
</feature>
<feature type="binding site" evidence="1">
    <location>
        <position position="338"/>
    </location>
    <ligand>
        <name>Zn(2+)</name>
        <dbReference type="ChEBI" id="CHEBI:29105"/>
    </ligand>
</feature>
<feature type="binding site" evidence="1">
    <location>
        <position position="389"/>
    </location>
    <ligand>
        <name>Zn(2+)</name>
        <dbReference type="ChEBI" id="CHEBI:29105"/>
    </ligand>
</feature>
<feature type="binding site" evidence="1">
    <location>
        <position position="519"/>
    </location>
    <ligand>
        <name>Zn(2+)</name>
        <dbReference type="ChEBI" id="CHEBI:29105"/>
    </ligand>
</feature>
<reference key="1">
    <citation type="journal article" date="2008" name="DNA Res.">
        <title>Determination of the genome sequence of Porphyromonas gingivalis strain ATCC 33277 and genomic comparison with strain W83 revealed extensive genome rearrangements in P. gingivalis.</title>
        <authorList>
            <person name="Naito M."/>
            <person name="Hirakawa H."/>
            <person name="Yamashita A."/>
            <person name="Ohara N."/>
            <person name="Shoji M."/>
            <person name="Yukitake H."/>
            <person name="Nakayama K."/>
            <person name="Toh H."/>
            <person name="Yoshimura F."/>
            <person name="Kuhara S."/>
            <person name="Hattori M."/>
            <person name="Hayashi T."/>
            <person name="Nakayama K."/>
        </authorList>
    </citation>
    <scope>NUCLEOTIDE SEQUENCE [LARGE SCALE GENOMIC DNA]</scope>
    <source>
        <strain>ATCC 33277 / DSM 20709 / CIP 103683 / JCM 12257 / NCTC 11834 / 2561</strain>
    </source>
</reference>
<protein>
    <recommendedName>
        <fullName evidence="1">Threonine--tRNA ligase</fullName>
        <ecNumber evidence="1">6.1.1.3</ecNumber>
    </recommendedName>
    <alternativeName>
        <fullName evidence="1">Threonyl-tRNA synthetase</fullName>
        <shortName evidence="1">ThrRS</shortName>
    </alternativeName>
</protein>
<sequence length="653" mass="75437">MIKITFPDGNFREYEAGITGWDIAGSISPRLQQDVLAAGVNGQVWDLHRPINEDAEVKLFKWDDAEGKHAFWHSSAHLMAEALEELYPGIKFGIGPAIENGFYYDVDPGEGISIKDADLPAIEKRMQDLAARKETIIRRDIAKADALRMFGDKDDQYKVELISELADGTITTYTQGGFTDLCRGPHLPNTGYIKAIKLLSVAGAYWRGDEKRKQLTRIYGISFPKKKMLDEYLELLEEAKKRDHRKIGKELELFAFSQNVGAGLPLWLPRGTQLRLRLEDFLKQIQKHFGYQQVITPHIGNKNLYITSGHYAKYGQDSFRPINTPQEGEEFMLKPMNCPHHCEIFKITPHSYRDLPIRLAEFGTVYRYEQSGELHGLTRVRGFTQDDAHLFCRPDQLKEEFCKVMDIIFIIFKALDFKNFEAQISLRDKVNREKYIGSEENWERAERAIIEACEEKGLPAVIEYGEAAFYGPKLDFMVKDALGRRWQLGTIQVDYNLPERFDLEYTGEDNKKHRPVMIHRAPFGSMERFVAVLIEHTAGKFPLWLTPDQVVVLPVSERFNEYAHRVAKELNQRDIRVQVDDRNEKVGRKIRDNELKRIPYMLIVGENESREEEVSVRKQGEGDMGIMKITTFAELIEKEVDDMISAWRKDYQN</sequence>
<proteinExistence type="inferred from homology"/>
<organism>
    <name type="scientific">Porphyromonas gingivalis (strain ATCC 33277 / DSM 20709 / CIP 103683 / JCM 12257 / NCTC 11834 / 2561)</name>
    <dbReference type="NCBI Taxonomy" id="431947"/>
    <lineage>
        <taxon>Bacteria</taxon>
        <taxon>Pseudomonadati</taxon>
        <taxon>Bacteroidota</taxon>
        <taxon>Bacteroidia</taxon>
        <taxon>Bacteroidales</taxon>
        <taxon>Porphyromonadaceae</taxon>
        <taxon>Porphyromonas</taxon>
    </lineage>
</organism>
<evidence type="ECO:0000255" key="1">
    <source>
        <dbReference type="HAMAP-Rule" id="MF_00184"/>
    </source>
</evidence>
<evidence type="ECO:0000255" key="2">
    <source>
        <dbReference type="PROSITE-ProRule" id="PRU01228"/>
    </source>
</evidence>
<comment type="function">
    <text evidence="1">Catalyzes the attachment of threonine to tRNA(Thr) in a two-step reaction: L-threonine is first activated by ATP to form Thr-AMP and then transferred to the acceptor end of tRNA(Thr). Also edits incorrectly charged L-seryl-tRNA(Thr).</text>
</comment>
<comment type="catalytic activity">
    <reaction evidence="1">
        <text>tRNA(Thr) + L-threonine + ATP = L-threonyl-tRNA(Thr) + AMP + diphosphate + H(+)</text>
        <dbReference type="Rhea" id="RHEA:24624"/>
        <dbReference type="Rhea" id="RHEA-COMP:9670"/>
        <dbReference type="Rhea" id="RHEA-COMP:9704"/>
        <dbReference type="ChEBI" id="CHEBI:15378"/>
        <dbReference type="ChEBI" id="CHEBI:30616"/>
        <dbReference type="ChEBI" id="CHEBI:33019"/>
        <dbReference type="ChEBI" id="CHEBI:57926"/>
        <dbReference type="ChEBI" id="CHEBI:78442"/>
        <dbReference type="ChEBI" id="CHEBI:78534"/>
        <dbReference type="ChEBI" id="CHEBI:456215"/>
        <dbReference type="EC" id="6.1.1.3"/>
    </reaction>
</comment>
<comment type="cofactor">
    <cofactor evidence="1">
        <name>Zn(2+)</name>
        <dbReference type="ChEBI" id="CHEBI:29105"/>
    </cofactor>
    <text evidence="1">Binds 1 zinc ion per subunit.</text>
</comment>
<comment type="subunit">
    <text evidence="1">Homodimer.</text>
</comment>
<comment type="subcellular location">
    <subcellularLocation>
        <location evidence="1">Cytoplasm</location>
    </subcellularLocation>
</comment>
<comment type="similarity">
    <text evidence="1">Belongs to the class-II aminoacyl-tRNA synthetase family.</text>
</comment>
<keyword id="KW-0030">Aminoacyl-tRNA synthetase</keyword>
<keyword id="KW-0067">ATP-binding</keyword>
<keyword id="KW-0963">Cytoplasm</keyword>
<keyword id="KW-0436">Ligase</keyword>
<keyword id="KW-0479">Metal-binding</keyword>
<keyword id="KW-0547">Nucleotide-binding</keyword>
<keyword id="KW-0648">Protein biosynthesis</keyword>
<keyword id="KW-0694">RNA-binding</keyword>
<keyword id="KW-0820">tRNA-binding</keyword>
<keyword id="KW-0862">Zinc</keyword>